<protein>
    <recommendedName>
        <fullName>Protein jagged-1</fullName>
        <shortName>Jagged1</shortName>
    </recommendedName>
    <cdAntigenName>CD339</cdAntigenName>
</protein>
<accession>Q63722</accession>
<accession>P70640</accession>
<keyword id="KW-0002">3D-structure</keyword>
<keyword id="KW-0106">Calcium</keyword>
<keyword id="KW-1003">Cell membrane</keyword>
<keyword id="KW-0217">Developmental protein</keyword>
<keyword id="KW-1015">Disulfide bond</keyword>
<keyword id="KW-0245">EGF-like domain</keyword>
<keyword id="KW-0325">Glycoprotein</keyword>
<keyword id="KW-0472">Membrane</keyword>
<keyword id="KW-0914">Notch signaling pathway</keyword>
<keyword id="KW-1185">Reference proteome</keyword>
<keyword id="KW-0677">Repeat</keyword>
<keyword id="KW-0732">Signal</keyword>
<keyword id="KW-0812">Transmembrane</keyword>
<keyword id="KW-1133">Transmembrane helix</keyword>
<evidence type="ECO:0000250" key="1"/>
<evidence type="ECO:0000250" key="2">
    <source>
        <dbReference type="UniProtKB" id="P78504"/>
    </source>
</evidence>
<evidence type="ECO:0000250" key="3">
    <source>
        <dbReference type="UniProtKB" id="Q9QXX0"/>
    </source>
</evidence>
<evidence type="ECO:0000255" key="4"/>
<evidence type="ECO:0000255" key="5">
    <source>
        <dbReference type="PROSITE-ProRule" id="PRU00076"/>
    </source>
</evidence>
<evidence type="ECO:0000255" key="6">
    <source>
        <dbReference type="PROSITE-ProRule" id="PRU00377"/>
    </source>
</evidence>
<evidence type="ECO:0000256" key="7">
    <source>
        <dbReference type="SAM" id="MobiDB-lite"/>
    </source>
</evidence>
<evidence type="ECO:0000269" key="8">
    <source>
    </source>
</evidence>
<evidence type="ECO:0007829" key="9">
    <source>
        <dbReference type="PDB" id="5UK5"/>
    </source>
</evidence>
<proteinExistence type="evidence at protein level"/>
<gene>
    <name type="primary">Jag1</name>
</gene>
<organism>
    <name type="scientific">Rattus norvegicus</name>
    <name type="common">Rat</name>
    <dbReference type="NCBI Taxonomy" id="10116"/>
    <lineage>
        <taxon>Eukaryota</taxon>
        <taxon>Metazoa</taxon>
        <taxon>Chordata</taxon>
        <taxon>Craniata</taxon>
        <taxon>Vertebrata</taxon>
        <taxon>Euteleostomi</taxon>
        <taxon>Mammalia</taxon>
        <taxon>Eutheria</taxon>
        <taxon>Euarchontoglires</taxon>
        <taxon>Glires</taxon>
        <taxon>Rodentia</taxon>
        <taxon>Myomorpha</taxon>
        <taxon>Muroidea</taxon>
        <taxon>Muridae</taxon>
        <taxon>Murinae</taxon>
        <taxon>Rattus</taxon>
    </lineage>
</organism>
<reference key="1">
    <citation type="journal article" date="1995" name="Cell">
        <title>Jagged: a mammalian ligand that activates Notch1.</title>
        <authorList>
            <person name="Lindsell C.E."/>
            <person name="Shawber C.J."/>
            <person name="Boulter J."/>
            <person name="Weinmaster G."/>
        </authorList>
    </citation>
    <scope>NUCLEOTIDE SEQUENCE [MRNA]</scope>
    <source>
        <tissue>Sciatic nerve</tissue>
    </source>
</reference>
<reference key="2">
    <citation type="journal article" date="2017" name="Dev. Cell">
        <title>Deciphering the fringe-mediated notch code: identification of activating and inhibiting sites allowing discrimination between ligands.</title>
        <authorList>
            <person name="Kakuda S."/>
            <person name="Haltiwanger R.S."/>
        </authorList>
    </citation>
    <scope>INTERACTION WITH NOTCH1</scope>
</reference>
<feature type="signal peptide" evidence="4">
    <location>
        <begin position="1"/>
        <end position="33"/>
    </location>
</feature>
<feature type="chain" id="PRO_0000007627" description="Protein jagged-1">
    <location>
        <begin position="34"/>
        <end position="1219"/>
    </location>
</feature>
<feature type="topological domain" description="Extracellular" evidence="4">
    <location>
        <begin position="34"/>
        <end position="1067"/>
    </location>
</feature>
<feature type="transmembrane region" description="Helical" evidence="4">
    <location>
        <begin position="1068"/>
        <end position="1093"/>
    </location>
</feature>
<feature type="topological domain" description="Cytoplasmic" evidence="4">
    <location>
        <begin position="1094"/>
        <end position="1219"/>
    </location>
</feature>
<feature type="domain" description="DSL" evidence="6">
    <location>
        <begin position="185"/>
        <end position="229"/>
    </location>
</feature>
<feature type="domain" description="EGF-like 1" evidence="5">
    <location>
        <begin position="230"/>
        <end position="263"/>
    </location>
</feature>
<feature type="domain" description="EGF-like 2; atypical" evidence="5">
    <location>
        <begin position="264"/>
        <end position="294"/>
    </location>
</feature>
<feature type="domain" description="EGF-like 3" evidence="5">
    <location>
        <begin position="296"/>
        <end position="334"/>
    </location>
</feature>
<feature type="domain" description="EGF-like 4" evidence="5">
    <location>
        <begin position="336"/>
        <end position="372"/>
    </location>
</feature>
<feature type="domain" description="EGF-like 5; calcium-binding" evidence="5">
    <location>
        <begin position="374"/>
        <end position="410"/>
    </location>
</feature>
<feature type="domain" description="EGF-like 6; calcium-binding" evidence="5">
    <location>
        <begin position="412"/>
        <end position="448"/>
    </location>
</feature>
<feature type="domain" description="EGF-like 7; calcium-binding" evidence="5">
    <location>
        <begin position="450"/>
        <end position="485"/>
    </location>
</feature>
<feature type="domain" description="EGF-like 8; calcium-binding" evidence="5">
    <location>
        <begin position="487"/>
        <end position="523"/>
    </location>
</feature>
<feature type="domain" description="EGF-like 9" evidence="5">
    <location>
        <begin position="525"/>
        <end position="561"/>
    </location>
</feature>
<feature type="domain" description="EGF-like 10" evidence="5">
    <location>
        <begin position="586"/>
        <end position="627"/>
    </location>
</feature>
<feature type="domain" description="EGF-like 11; calcium-binding" evidence="5">
    <location>
        <begin position="629"/>
        <end position="665"/>
    </location>
</feature>
<feature type="domain" description="EGF-like 12; calcium-binding" evidence="5">
    <location>
        <begin position="667"/>
        <end position="703"/>
    </location>
</feature>
<feature type="domain" description="EGF-like 13" evidence="5">
    <location>
        <begin position="705"/>
        <end position="741"/>
    </location>
</feature>
<feature type="domain" description="EGF-like 14" evidence="5">
    <location>
        <begin position="744"/>
        <end position="780"/>
    </location>
</feature>
<feature type="domain" description="EGF-like 15; calcium-binding" evidence="5">
    <location>
        <begin position="782"/>
        <end position="818"/>
    </location>
</feature>
<feature type="domain" description="EGF-like 16; calcium-binding" evidence="5">
    <location>
        <begin position="820"/>
        <end position="856"/>
    </location>
</feature>
<feature type="region of interest" description="Important for interaction with NOTCH1" evidence="1">
    <location>
        <begin position="199"/>
        <end position="207"/>
    </location>
</feature>
<feature type="region of interest" description="Disordered" evidence="7">
    <location>
        <begin position="1182"/>
        <end position="1219"/>
    </location>
</feature>
<feature type="compositionally biased region" description="Polar residues" evidence="7">
    <location>
        <begin position="1189"/>
        <end position="1200"/>
    </location>
</feature>
<feature type="glycosylation site" description="N-linked (GlcNAc...) asparagine" evidence="4">
    <location>
        <position position="143"/>
    </location>
</feature>
<feature type="glycosylation site" description="N-linked (GlcNAc...) asparagine" evidence="4">
    <location>
        <position position="217"/>
    </location>
</feature>
<feature type="glycosylation site" description="N-linked (GlcNAc...) asparagine" evidence="4">
    <location>
        <position position="382"/>
    </location>
</feature>
<feature type="glycosylation site" description="N-linked (GlcNAc...) asparagine" evidence="4">
    <location>
        <position position="559"/>
    </location>
</feature>
<feature type="glycosylation site" description="N-linked (GlcNAc...) asparagine" evidence="4">
    <location>
        <position position="745"/>
    </location>
</feature>
<feature type="glycosylation site" description="N-linked (GlcNAc...) asparagine" evidence="4">
    <location>
        <position position="960"/>
    </location>
</feature>
<feature type="glycosylation site" description="N-linked (GlcNAc...) asparagine" evidence="4">
    <location>
        <position position="991"/>
    </location>
</feature>
<feature type="glycosylation site" description="N-linked (GlcNAc...) asparagine" evidence="4">
    <location>
        <position position="1045"/>
    </location>
</feature>
<feature type="glycosylation site" description="N-linked (GlcNAc...) asparagine" evidence="4">
    <location>
        <position position="1064"/>
    </location>
</feature>
<feature type="disulfide bond" evidence="1">
    <location>
        <begin position="187"/>
        <end position="196"/>
    </location>
</feature>
<feature type="disulfide bond" evidence="1">
    <location>
        <begin position="200"/>
        <end position="212"/>
    </location>
</feature>
<feature type="disulfide bond" evidence="1">
    <location>
        <begin position="220"/>
        <end position="229"/>
    </location>
</feature>
<feature type="disulfide bond" evidence="1">
    <location>
        <begin position="234"/>
        <end position="245"/>
    </location>
</feature>
<feature type="disulfide bond" evidence="1">
    <location>
        <begin position="238"/>
        <end position="251"/>
    </location>
</feature>
<feature type="disulfide bond" evidence="1">
    <location>
        <begin position="253"/>
        <end position="262"/>
    </location>
</feature>
<feature type="disulfide bond" evidence="1">
    <location>
        <begin position="265"/>
        <end position="276"/>
    </location>
</feature>
<feature type="disulfide bond" evidence="1">
    <location>
        <begin position="271"/>
        <end position="282"/>
    </location>
</feature>
<feature type="disulfide bond" evidence="1">
    <location>
        <begin position="284"/>
        <end position="293"/>
    </location>
</feature>
<feature type="disulfide bond" evidence="1">
    <location>
        <begin position="300"/>
        <end position="312"/>
    </location>
</feature>
<feature type="disulfide bond" evidence="1">
    <location>
        <begin position="306"/>
        <end position="322"/>
    </location>
</feature>
<feature type="disulfide bond" evidence="1">
    <location>
        <begin position="324"/>
        <end position="333"/>
    </location>
</feature>
<feature type="disulfide bond" evidence="1">
    <location>
        <begin position="340"/>
        <end position="351"/>
    </location>
</feature>
<feature type="disulfide bond" evidence="1">
    <location>
        <begin position="345"/>
        <end position="360"/>
    </location>
</feature>
<feature type="disulfide bond" evidence="1">
    <location>
        <begin position="362"/>
        <end position="371"/>
    </location>
</feature>
<feature type="disulfide bond" evidence="1">
    <location>
        <begin position="378"/>
        <end position="389"/>
    </location>
</feature>
<feature type="disulfide bond" evidence="1">
    <location>
        <begin position="383"/>
        <end position="398"/>
    </location>
</feature>
<feature type="disulfide bond" evidence="1">
    <location>
        <begin position="400"/>
        <end position="409"/>
    </location>
</feature>
<feature type="disulfide bond" evidence="1">
    <location>
        <begin position="416"/>
        <end position="427"/>
    </location>
</feature>
<feature type="disulfide bond" evidence="1">
    <location>
        <begin position="421"/>
        <end position="436"/>
    </location>
</feature>
<feature type="disulfide bond" evidence="1">
    <location>
        <begin position="438"/>
        <end position="447"/>
    </location>
</feature>
<feature type="disulfide bond" evidence="1">
    <location>
        <begin position="454"/>
        <end position="464"/>
    </location>
</feature>
<feature type="disulfide bond" evidence="1">
    <location>
        <begin position="458"/>
        <end position="473"/>
    </location>
</feature>
<feature type="disulfide bond" evidence="1">
    <location>
        <begin position="475"/>
        <end position="484"/>
    </location>
</feature>
<feature type="disulfide bond" evidence="1">
    <location>
        <begin position="491"/>
        <end position="502"/>
    </location>
</feature>
<feature type="disulfide bond" evidence="1">
    <location>
        <begin position="496"/>
        <end position="511"/>
    </location>
</feature>
<feature type="disulfide bond" evidence="1">
    <location>
        <begin position="513"/>
        <end position="522"/>
    </location>
</feature>
<feature type="disulfide bond" evidence="1">
    <location>
        <begin position="529"/>
        <end position="540"/>
    </location>
</feature>
<feature type="disulfide bond" evidence="1">
    <location>
        <begin position="534"/>
        <end position="549"/>
    </location>
</feature>
<feature type="disulfide bond" evidence="1">
    <location>
        <begin position="551"/>
        <end position="560"/>
    </location>
</feature>
<feature type="disulfide bond" evidence="1">
    <location>
        <begin position="578"/>
        <end position="605"/>
    </location>
</feature>
<feature type="disulfide bond" evidence="1">
    <location>
        <begin position="599"/>
        <end position="615"/>
    </location>
</feature>
<feature type="disulfide bond" evidence="1">
    <location>
        <begin position="617"/>
        <end position="626"/>
    </location>
</feature>
<feature type="disulfide bond" evidence="1">
    <location>
        <begin position="633"/>
        <end position="644"/>
    </location>
</feature>
<feature type="disulfide bond" evidence="1">
    <location>
        <begin position="638"/>
        <end position="653"/>
    </location>
</feature>
<feature type="disulfide bond" evidence="1">
    <location>
        <begin position="655"/>
        <end position="664"/>
    </location>
</feature>
<feature type="disulfide bond" evidence="1">
    <location>
        <begin position="671"/>
        <end position="682"/>
    </location>
</feature>
<feature type="disulfide bond" evidence="1">
    <location>
        <begin position="676"/>
        <end position="691"/>
    </location>
</feature>
<feature type="disulfide bond" evidence="1">
    <location>
        <begin position="693"/>
        <end position="702"/>
    </location>
</feature>
<feature type="disulfide bond" evidence="1">
    <location>
        <begin position="709"/>
        <end position="720"/>
    </location>
</feature>
<feature type="disulfide bond" evidence="1">
    <location>
        <begin position="714"/>
        <end position="729"/>
    </location>
</feature>
<feature type="disulfide bond" evidence="1">
    <location>
        <begin position="731"/>
        <end position="740"/>
    </location>
</feature>
<feature type="disulfide bond" evidence="1">
    <location>
        <begin position="748"/>
        <end position="759"/>
    </location>
</feature>
<feature type="disulfide bond" evidence="1">
    <location>
        <begin position="753"/>
        <end position="768"/>
    </location>
</feature>
<feature type="disulfide bond" evidence="1">
    <location>
        <begin position="770"/>
        <end position="779"/>
    </location>
</feature>
<feature type="disulfide bond" evidence="1">
    <location>
        <begin position="786"/>
        <end position="797"/>
    </location>
</feature>
<feature type="disulfide bond" evidence="1">
    <location>
        <begin position="791"/>
        <end position="806"/>
    </location>
</feature>
<feature type="disulfide bond" evidence="1">
    <location>
        <begin position="808"/>
        <end position="817"/>
    </location>
</feature>
<feature type="disulfide bond" evidence="1">
    <location>
        <begin position="824"/>
        <end position="835"/>
    </location>
</feature>
<feature type="disulfide bond" evidence="1">
    <location>
        <begin position="829"/>
        <end position="844"/>
    </location>
</feature>
<feature type="disulfide bond" evidence="1">
    <location>
        <begin position="846"/>
        <end position="855"/>
    </location>
</feature>
<feature type="disulfide bond" evidence="1">
    <location>
        <begin position="925"/>
        <end position="936"/>
    </location>
</feature>
<feature type="disulfide bond" evidence="1">
    <location>
        <begin position="948"/>
        <end position="958"/>
    </location>
</feature>
<feature type="strand" evidence="9">
    <location>
        <begin position="32"/>
        <end position="43"/>
    </location>
</feature>
<feature type="strand" evidence="9">
    <location>
        <begin position="54"/>
        <end position="59"/>
    </location>
</feature>
<feature type="turn" evidence="9">
    <location>
        <begin position="61"/>
        <end position="64"/>
    </location>
</feature>
<feature type="strand" evidence="9">
    <location>
        <begin position="66"/>
        <end position="68"/>
    </location>
</feature>
<feature type="strand" evidence="9">
    <location>
        <begin position="73"/>
        <end position="81"/>
    </location>
</feature>
<feature type="strand" evidence="9">
    <location>
        <begin position="103"/>
        <end position="108"/>
    </location>
</feature>
<feature type="strand" evidence="9">
    <location>
        <begin position="119"/>
        <end position="124"/>
    </location>
</feature>
<feature type="strand" evidence="9">
    <location>
        <begin position="130"/>
        <end position="140"/>
    </location>
</feature>
<feature type="strand" evidence="9">
    <location>
        <begin position="143"/>
        <end position="147"/>
    </location>
</feature>
<feature type="strand" evidence="9">
    <location>
        <begin position="150"/>
        <end position="153"/>
    </location>
</feature>
<feature type="strand" evidence="9">
    <location>
        <begin position="156"/>
        <end position="160"/>
    </location>
</feature>
<feature type="strand" evidence="9">
    <location>
        <begin position="168"/>
        <end position="170"/>
    </location>
</feature>
<feature type="strand" evidence="9">
    <location>
        <begin position="174"/>
        <end position="187"/>
    </location>
</feature>
<feature type="turn" evidence="9">
    <location>
        <begin position="193"/>
        <end position="196"/>
    </location>
</feature>
<feature type="strand" evidence="9">
    <location>
        <begin position="203"/>
        <end position="205"/>
    </location>
</feature>
<feature type="strand" evidence="9">
    <location>
        <begin position="208"/>
        <end position="210"/>
    </location>
</feature>
<feature type="turn" evidence="9">
    <location>
        <begin position="226"/>
        <end position="229"/>
    </location>
</feature>
<feature type="strand" evidence="9">
    <location>
        <begin position="257"/>
        <end position="259"/>
    </location>
</feature>
<feature type="strand" evidence="9">
    <location>
        <begin position="272"/>
        <end position="275"/>
    </location>
</feature>
<feature type="strand" evidence="9">
    <location>
        <begin position="288"/>
        <end position="290"/>
    </location>
</feature>
<feature type="helix" evidence="9">
    <location>
        <begin position="299"/>
        <end position="303"/>
    </location>
</feature>
<feature type="strand" evidence="9">
    <location>
        <begin position="311"/>
        <end position="316"/>
    </location>
</feature>
<feature type="strand" evidence="9">
    <location>
        <begin position="319"/>
        <end position="323"/>
    </location>
</feature>
<feature type="turn" evidence="9">
    <location>
        <begin position="330"/>
        <end position="333"/>
    </location>
</feature>
<dbReference type="EMBL" id="L38483">
    <property type="protein sequence ID" value="AAB06509.1"/>
    <property type="molecule type" value="mRNA"/>
</dbReference>
<dbReference type="PIR" id="A56136">
    <property type="entry name" value="A56136"/>
</dbReference>
<dbReference type="RefSeq" id="NP_062020.1">
    <property type="nucleotide sequence ID" value="NM_019147.1"/>
</dbReference>
<dbReference type="PDB" id="5UK5">
    <property type="method" value="X-ray"/>
    <property type="resolution" value="2.51 A"/>
    <property type="chains" value="B=32-334"/>
</dbReference>
<dbReference type="PDBsum" id="5UK5"/>
<dbReference type="BMRB" id="Q63722"/>
<dbReference type="SMR" id="Q63722"/>
<dbReference type="BioGRID" id="247829">
    <property type="interactions" value="3"/>
</dbReference>
<dbReference type="FunCoup" id="Q63722">
    <property type="interactions" value="848"/>
</dbReference>
<dbReference type="IntAct" id="Q63722">
    <property type="interactions" value="5"/>
</dbReference>
<dbReference type="MINT" id="Q63722"/>
<dbReference type="STRING" id="10116.ENSRNOP00000010638"/>
<dbReference type="GlyCosmos" id="Q63722">
    <property type="glycosylation" value="9 sites, No reported glycans"/>
</dbReference>
<dbReference type="GlyGen" id="Q63722">
    <property type="glycosylation" value="10 sites"/>
</dbReference>
<dbReference type="PhosphoSitePlus" id="Q63722"/>
<dbReference type="PaxDb" id="10116-ENSRNOP00000010638"/>
<dbReference type="GeneID" id="29146"/>
<dbReference type="KEGG" id="rno:29146"/>
<dbReference type="UCSC" id="RGD:2937">
    <property type="organism name" value="rat"/>
</dbReference>
<dbReference type="AGR" id="RGD:2937"/>
<dbReference type="CTD" id="182"/>
<dbReference type="RGD" id="2937">
    <property type="gene designation" value="Jag1"/>
</dbReference>
<dbReference type="eggNOG" id="KOG1217">
    <property type="taxonomic scope" value="Eukaryota"/>
</dbReference>
<dbReference type="InParanoid" id="Q63722"/>
<dbReference type="PhylomeDB" id="Q63722"/>
<dbReference type="Reactome" id="R-RNO-2979096">
    <property type="pathway name" value="NOTCH2 Activation and Transmission of Signal to the Nucleus"/>
</dbReference>
<dbReference type="Reactome" id="R-RNO-9013149">
    <property type="pathway name" value="RAC1 GTPase cycle"/>
</dbReference>
<dbReference type="Reactome" id="R-RNO-9013507">
    <property type="pathway name" value="NOTCH3 Activation and Transmission of Signal to the Nucleus"/>
</dbReference>
<dbReference type="PRO" id="PR:Q63722"/>
<dbReference type="Proteomes" id="UP000002494">
    <property type="component" value="Unplaced"/>
</dbReference>
<dbReference type="GO" id="GO:0005912">
    <property type="term" value="C:adherens junction"/>
    <property type="evidence" value="ECO:0000250"/>
    <property type="project" value="UniProtKB"/>
</dbReference>
<dbReference type="GO" id="GO:0045177">
    <property type="term" value="C:apical part of cell"/>
    <property type="evidence" value="ECO:0000266"/>
    <property type="project" value="RGD"/>
</dbReference>
<dbReference type="GO" id="GO:0016324">
    <property type="term" value="C:apical plasma membrane"/>
    <property type="evidence" value="ECO:0000250"/>
    <property type="project" value="UniProtKB"/>
</dbReference>
<dbReference type="GO" id="GO:0016020">
    <property type="term" value="C:membrane"/>
    <property type="evidence" value="ECO:0000266"/>
    <property type="project" value="RGD"/>
</dbReference>
<dbReference type="GO" id="GO:0005886">
    <property type="term" value="C:plasma membrane"/>
    <property type="evidence" value="ECO:0000266"/>
    <property type="project" value="RGD"/>
</dbReference>
<dbReference type="GO" id="GO:0005509">
    <property type="term" value="F:calcium ion binding"/>
    <property type="evidence" value="ECO:0007669"/>
    <property type="project" value="InterPro"/>
</dbReference>
<dbReference type="GO" id="GO:0060090">
    <property type="term" value="F:molecular adaptor activity"/>
    <property type="evidence" value="ECO:0000266"/>
    <property type="project" value="RGD"/>
</dbReference>
<dbReference type="GO" id="GO:0005112">
    <property type="term" value="F:Notch binding"/>
    <property type="evidence" value="ECO:0000353"/>
    <property type="project" value="UniProtKB"/>
</dbReference>
<dbReference type="GO" id="GO:0005543">
    <property type="term" value="F:phospholipid binding"/>
    <property type="evidence" value="ECO:0000266"/>
    <property type="project" value="RGD"/>
</dbReference>
<dbReference type="GO" id="GO:0048018">
    <property type="term" value="F:receptor ligand activity"/>
    <property type="evidence" value="ECO:0000314"/>
    <property type="project" value="WormBase"/>
</dbReference>
<dbReference type="GO" id="GO:0009887">
    <property type="term" value="P:animal organ morphogenesis"/>
    <property type="evidence" value="ECO:0000266"/>
    <property type="project" value="RGD"/>
</dbReference>
<dbReference type="GO" id="GO:0031100">
    <property type="term" value="P:animal organ regeneration"/>
    <property type="evidence" value="ECO:0000270"/>
    <property type="project" value="RGD"/>
</dbReference>
<dbReference type="GO" id="GO:0035909">
    <property type="term" value="P:aorta morphogenesis"/>
    <property type="evidence" value="ECO:0000266"/>
    <property type="project" value="RGD"/>
</dbReference>
<dbReference type="GO" id="GO:0001974">
    <property type="term" value="P:blood vessel remodeling"/>
    <property type="evidence" value="ECO:0000266"/>
    <property type="project" value="RGD"/>
</dbReference>
<dbReference type="GO" id="GO:0043010">
    <property type="term" value="P:camera-type eye development"/>
    <property type="evidence" value="ECO:0000266"/>
    <property type="project" value="RGD"/>
</dbReference>
<dbReference type="GO" id="GO:0061309">
    <property type="term" value="P:cardiac neural crest cell development involved in outflow tract morphogenesis"/>
    <property type="evidence" value="ECO:0000266"/>
    <property type="project" value="RGD"/>
</dbReference>
<dbReference type="GO" id="GO:0003215">
    <property type="term" value="P:cardiac right ventricle morphogenesis"/>
    <property type="evidence" value="ECO:0000266"/>
    <property type="project" value="RGD"/>
</dbReference>
<dbReference type="GO" id="GO:0060411">
    <property type="term" value="P:cardiac septum morphogenesis"/>
    <property type="evidence" value="ECO:0000266"/>
    <property type="project" value="RGD"/>
</dbReference>
<dbReference type="GO" id="GO:0001709">
    <property type="term" value="P:cell fate determination"/>
    <property type="evidence" value="ECO:0000303"/>
    <property type="project" value="UniProtKB"/>
</dbReference>
<dbReference type="GO" id="GO:0061073">
    <property type="term" value="P:ciliary body morphogenesis"/>
    <property type="evidence" value="ECO:0000266"/>
    <property type="project" value="RGD"/>
</dbReference>
<dbReference type="GO" id="GO:0072017">
    <property type="term" value="P:distal tubule development"/>
    <property type="evidence" value="ECO:0000266"/>
    <property type="project" value="RGD"/>
</dbReference>
<dbReference type="GO" id="GO:0061444">
    <property type="term" value="P:endocardial cushion cell development"/>
    <property type="evidence" value="ECO:0000266"/>
    <property type="project" value="RGD"/>
</dbReference>
<dbReference type="GO" id="GO:0002085">
    <property type="term" value="P:inhibition of neuroepithelial cell differentiation"/>
    <property type="evidence" value="ECO:0000266"/>
    <property type="project" value="RGD"/>
</dbReference>
<dbReference type="GO" id="GO:0042491">
    <property type="term" value="P:inner ear auditory receptor cell differentiation"/>
    <property type="evidence" value="ECO:0000315"/>
    <property type="project" value="RGD"/>
</dbReference>
<dbReference type="GO" id="GO:0048839">
    <property type="term" value="P:inner ear development"/>
    <property type="evidence" value="ECO:0000266"/>
    <property type="project" value="RGD"/>
</dbReference>
<dbReference type="GO" id="GO:0072070">
    <property type="term" value="P:loop of Henle development"/>
    <property type="evidence" value="ECO:0000266"/>
    <property type="project" value="RGD"/>
</dbReference>
<dbReference type="GO" id="GO:0002011">
    <property type="term" value="P:morphogenesis of an epithelial sheet"/>
    <property type="evidence" value="ECO:0000266"/>
    <property type="project" value="RGD"/>
</dbReference>
<dbReference type="GO" id="GO:0045596">
    <property type="term" value="P:negative regulation of cell differentiation"/>
    <property type="evidence" value="ECO:0000314"/>
    <property type="project" value="RGD"/>
</dbReference>
<dbReference type="GO" id="GO:0030336">
    <property type="term" value="P:negative regulation of cell migration"/>
    <property type="evidence" value="ECO:0000266"/>
    <property type="project" value="RGD"/>
</dbReference>
<dbReference type="GO" id="GO:0022408">
    <property type="term" value="P:negative regulation of cell-cell adhesion"/>
    <property type="evidence" value="ECO:0000266"/>
    <property type="project" value="RGD"/>
</dbReference>
<dbReference type="GO" id="GO:0001953">
    <property type="term" value="P:negative regulation of cell-matrix adhesion"/>
    <property type="evidence" value="ECO:0000266"/>
    <property type="project" value="RGD"/>
</dbReference>
<dbReference type="GO" id="GO:0045602">
    <property type="term" value="P:negative regulation of endothelial cell differentiation"/>
    <property type="evidence" value="ECO:0000266"/>
    <property type="project" value="RGD"/>
</dbReference>
<dbReference type="GO" id="GO:0045599">
    <property type="term" value="P:negative regulation of fat cell differentiation"/>
    <property type="evidence" value="ECO:0000266"/>
    <property type="project" value="RGD"/>
</dbReference>
<dbReference type="GO" id="GO:0045665">
    <property type="term" value="P:negative regulation of neuron differentiation"/>
    <property type="evidence" value="ECO:0000266"/>
    <property type="project" value="RGD"/>
</dbReference>
<dbReference type="GO" id="GO:2000737">
    <property type="term" value="P:negative regulation of stem cell differentiation"/>
    <property type="evidence" value="ECO:0000266"/>
    <property type="project" value="RGD"/>
</dbReference>
<dbReference type="GO" id="GO:0072006">
    <property type="term" value="P:nephron development"/>
    <property type="evidence" value="ECO:0000250"/>
    <property type="project" value="UniProtKB"/>
</dbReference>
<dbReference type="GO" id="GO:0061101">
    <property type="term" value="P:neuroendocrine cell differentiation"/>
    <property type="evidence" value="ECO:0000266"/>
    <property type="project" value="RGD"/>
</dbReference>
<dbReference type="GO" id="GO:0030182">
    <property type="term" value="P:neuron differentiation"/>
    <property type="evidence" value="ECO:0000266"/>
    <property type="project" value="RGD"/>
</dbReference>
<dbReference type="GO" id="GO:0097150">
    <property type="term" value="P:neuronal stem cell population maintenance"/>
    <property type="evidence" value="ECO:0000266"/>
    <property type="project" value="RGD"/>
</dbReference>
<dbReference type="GO" id="GO:0007219">
    <property type="term" value="P:Notch signaling pathway"/>
    <property type="evidence" value="ECO:0000314"/>
    <property type="project" value="BHF-UCL"/>
</dbReference>
<dbReference type="GO" id="GO:0072015">
    <property type="term" value="P:podocyte development"/>
    <property type="evidence" value="ECO:0000250"/>
    <property type="project" value="UniProtKB"/>
</dbReference>
<dbReference type="GO" id="GO:0062043">
    <property type="term" value="P:positive regulation of cardiac epithelial to mesenchymal transition"/>
    <property type="evidence" value="ECO:0000316"/>
    <property type="project" value="BHF-UCL"/>
</dbReference>
<dbReference type="GO" id="GO:0010628">
    <property type="term" value="P:positive regulation of gene expression"/>
    <property type="evidence" value="ECO:0000316"/>
    <property type="project" value="BHF-UCL"/>
</dbReference>
<dbReference type="GO" id="GO:0045639">
    <property type="term" value="P:positive regulation of myeloid cell differentiation"/>
    <property type="evidence" value="ECO:0000266"/>
    <property type="project" value="RGD"/>
</dbReference>
<dbReference type="GO" id="GO:0045747">
    <property type="term" value="P:positive regulation of Notch signaling pathway"/>
    <property type="evidence" value="ECO:0000250"/>
    <property type="project" value="UniProtKB"/>
</dbReference>
<dbReference type="GO" id="GO:0045669">
    <property type="term" value="P:positive regulation of osteoblast differentiation"/>
    <property type="evidence" value="ECO:0000266"/>
    <property type="project" value="RGD"/>
</dbReference>
<dbReference type="GO" id="GO:0045944">
    <property type="term" value="P:positive regulation of transcription by RNA polymerase II"/>
    <property type="evidence" value="ECO:0000266"/>
    <property type="project" value="RGD"/>
</dbReference>
<dbReference type="GO" id="GO:0061156">
    <property type="term" value="P:pulmonary artery morphogenesis"/>
    <property type="evidence" value="ECO:0000266"/>
    <property type="project" value="RGD"/>
</dbReference>
<dbReference type="GO" id="GO:0003184">
    <property type="term" value="P:pulmonary valve morphogenesis"/>
    <property type="evidence" value="ECO:0000266"/>
    <property type="project" value="RGD"/>
</dbReference>
<dbReference type="GO" id="GO:0042127">
    <property type="term" value="P:regulation of cell population proliferation"/>
    <property type="evidence" value="ECO:0000315"/>
    <property type="project" value="RGD"/>
</dbReference>
<dbReference type="GO" id="GO:0050678">
    <property type="term" value="P:regulation of epithelial cell proliferation"/>
    <property type="evidence" value="ECO:0000266"/>
    <property type="project" value="RGD"/>
</dbReference>
<dbReference type="GO" id="GO:0032495">
    <property type="term" value="P:response to muramyl dipeptide"/>
    <property type="evidence" value="ECO:0000266"/>
    <property type="project" value="RGD"/>
</dbReference>
<dbReference type="GO" id="GO:0002456">
    <property type="term" value="P:T cell mediated immunity"/>
    <property type="evidence" value="ECO:0000266"/>
    <property type="project" value="RGD"/>
</dbReference>
<dbReference type="GO" id="GO:0042060">
    <property type="term" value="P:wound healing"/>
    <property type="evidence" value="ECO:0000270"/>
    <property type="project" value="UniProtKB"/>
</dbReference>
<dbReference type="CDD" id="cd00054">
    <property type="entry name" value="EGF_CA"/>
    <property type="match status" value="13"/>
</dbReference>
<dbReference type="FunFam" id="2.10.25.10:FF:000018">
    <property type="entry name" value="Delta-like 1"/>
    <property type="match status" value="1"/>
</dbReference>
<dbReference type="FunFam" id="2.10.25.10:FF:000007">
    <property type="entry name" value="Delta-like protein"/>
    <property type="match status" value="4"/>
</dbReference>
<dbReference type="FunFam" id="2.10.25.10:FF:000061">
    <property type="entry name" value="Delta-like protein"/>
    <property type="match status" value="1"/>
</dbReference>
<dbReference type="FunFam" id="2.10.25.10:FF:000117">
    <property type="entry name" value="Delta-like protein"/>
    <property type="match status" value="1"/>
</dbReference>
<dbReference type="FunFam" id="2.10.25.10:FF:000148">
    <property type="entry name" value="Delta-like protein"/>
    <property type="match status" value="1"/>
</dbReference>
<dbReference type="FunFam" id="2.10.25.10:FF:000181">
    <property type="entry name" value="Delta-like protein"/>
    <property type="match status" value="1"/>
</dbReference>
<dbReference type="FunFam" id="2.10.25.10:FF:000229">
    <property type="entry name" value="Delta-like protein"/>
    <property type="match status" value="1"/>
</dbReference>
<dbReference type="FunFam" id="2.10.25.10:FF:000431">
    <property type="entry name" value="Delta-like protein"/>
    <property type="match status" value="1"/>
</dbReference>
<dbReference type="FunFam" id="2.10.25.140:FF:000001">
    <property type="entry name" value="Delta-like protein"/>
    <property type="match status" value="1"/>
</dbReference>
<dbReference type="FunFam" id="2.60.40.3510:FF:000001">
    <property type="entry name" value="Delta-like protein"/>
    <property type="match status" value="1"/>
</dbReference>
<dbReference type="FunFam" id="2.10.25.10:FF:000004">
    <property type="entry name" value="Neurogenic locus notch 1"/>
    <property type="match status" value="1"/>
</dbReference>
<dbReference type="FunFam" id="2.10.25.10:FF:000143">
    <property type="entry name" value="Protein crumbs 1"/>
    <property type="match status" value="1"/>
</dbReference>
<dbReference type="FunFam" id="2.10.25.10:FF:000146">
    <property type="entry name" value="Putative neurogenic locus notch"/>
    <property type="match status" value="1"/>
</dbReference>
<dbReference type="Gene3D" id="2.10.25.140">
    <property type="match status" value="1"/>
</dbReference>
<dbReference type="Gene3D" id="2.60.40.3510">
    <property type="match status" value="1"/>
</dbReference>
<dbReference type="Gene3D" id="2.10.25.10">
    <property type="entry name" value="Laminin"/>
    <property type="match status" value="15"/>
</dbReference>
<dbReference type="InterPro" id="IPR001774">
    <property type="entry name" value="DSL"/>
</dbReference>
<dbReference type="InterPro" id="IPR001881">
    <property type="entry name" value="EGF-like_Ca-bd_dom"/>
</dbReference>
<dbReference type="InterPro" id="IPR013032">
    <property type="entry name" value="EGF-like_CS"/>
</dbReference>
<dbReference type="InterPro" id="IPR000742">
    <property type="entry name" value="EGF-like_dom"/>
</dbReference>
<dbReference type="InterPro" id="IPR000152">
    <property type="entry name" value="EGF-type_Asp/Asn_hydroxyl_site"/>
</dbReference>
<dbReference type="InterPro" id="IPR018097">
    <property type="entry name" value="EGF_Ca-bd_CS"/>
</dbReference>
<dbReference type="InterPro" id="IPR009030">
    <property type="entry name" value="Growth_fac_rcpt_cys_sf"/>
</dbReference>
<dbReference type="InterPro" id="IPR056986">
    <property type="entry name" value="JAG1_1/2_dom"/>
</dbReference>
<dbReference type="InterPro" id="IPR026219">
    <property type="entry name" value="Jagged/Serrate"/>
</dbReference>
<dbReference type="InterPro" id="IPR011651">
    <property type="entry name" value="Notch_ligand_N"/>
</dbReference>
<dbReference type="InterPro" id="IPR001007">
    <property type="entry name" value="VWF_dom"/>
</dbReference>
<dbReference type="PANTHER" id="PTHR12916">
    <property type="entry name" value="CYTOCHROME C OXIDASE POLYPEPTIDE VIC-2"/>
    <property type="match status" value="1"/>
</dbReference>
<dbReference type="PANTHER" id="PTHR12916:SF12">
    <property type="entry name" value="DELTA-LIKE PROTEIN"/>
    <property type="match status" value="1"/>
</dbReference>
<dbReference type="Pfam" id="PF01414">
    <property type="entry name" value="DSL"/>
    <property type="match status" value="1"/>
</dbReference>
<dbReference type="Pfam" id="PF00008">
    <property type="entry name" value="EGF"/>
    <property type="match status" value="5"/>
</dbReference>
<dbReference type="Pfam" id="PF21700">
    <property type="entry name" value="EGF_DL_JAG"/>
    <property type="match status" value="1"/>
</dbReference>
<dbReference type="Pfam" id="PF25024">
    <property type="entry name" value="EGF_TEN"/>
    <property type="match status" value="1"/>
</dbReference>
<dbReference type="Pfam" id="PF12661">
    <property type="entry name" value="hEGF"/>
    <property type="match status" value="2"/>
</dbReference>
<dbReference type="Pfam" id="PF23575">
    <property type="entry name" value="JAG1"/>
    <property type="match status" value="1"/>
</dbReference>
<dbReference type="Pfam" id="PF07657">
    <property type="entry name" value="MNNL"/>
    <property type="match status" value="1"/>
</dbReference>
<dbReference type="PRINTS" id="PR00010">
    <property type="entry name" value="EGFBLOOD"/>
</dbReference>
<dbReference type="PRINTS" id="PR02059">
    <property type="entry name" value="JAGGEDFAMILY"/>
</dbReference>
<dbReference type="SMART" id="SM00051">
    <property type="entry name" value="DSL"/>
    <property type="match status" value="1"/>
</dbReference>
<dbReference type="SMART" id="SM00181">
    <property type="entry name" value="EGF"/>
    <property type="match status" value="16"/>
</dbReference>
<dbReference type="SMART" id="SM00179">
    <property type="entry name" value="EGF_CA"/>
    <property type="match status" value="14"/>
</dbReference>
<dbReference type="SMART" id="SM00214">
    <property type="entry name" value="VWC"/>
    <property type="match status" value="1"/>
</dbReference>
<dbReference type="SMART" id="SM00215">
    <property type="entry name" value="VWC_out"/>
    <property type="match status" value="1"/>
</dbReference>
<dbReference type="SUPFAM" id="SSF57196">
    <property type="entry name" value="EGF/Laminin"/>
    <property type="match status" value="4"/>
</dbReference>
<dbReference type="SUPFAM" id="SSF57184">
    <property type="entry name" value="Growth factor receptor domain"/>
    <property type="match status" value="3"/>
</dbReference>
<dbReference type="PROSITE" id="PS00010">
    <property type="entry name" value="ASX_HYDROXYL"/>
    <property type="match status" value="10"/>
</dbReference>
<dbReference type="PROSITE" id="PS51051">
    <property type="entry name" value="DSL"/>
    <property type="match status" value="1"/>
</dbReference>
<dbReference type="PROSITE" id="PS00022">
    <property type="entry name" value="EGF_1"/>
    <property type="match status" value="16"/>
</dbReference>
<dbReference type="PROSITE" id="PS01186">
    <property type="entry name" value="EGF_2"/>
    <property type="match status" value="12"/>
</dbReference>
<dbReference type="PROSITE" id="PS50026">
    <property type="entry name" value="EGF_3"/>
    <property type="match status" value="16"/>
</dbReference>
<dbReference type="PROSITE" id="PS01187">
    <property type="entry name" value="EGF_CA"/>
    <property type="match status" value="8"/>
</dbReference>
<sequence length="1219" mass="134326">MRSPRTRGRPGRPLSLLLALLCALRAKVCGASGQFELEILSMQNVNGELQNGNCCGGARNPGDRKCTRDECDTYFKVCLKEYQSRVTAGGPCSFGSGSTPVIGGNTFNLKASRGNDRNRIVLPFSFAWPRSYTLLVEAWDSSNDTIQPDSIIEKASHSGMINPSRQWQTLKQNTGIAHFEYQIRVTCDDHYYGFGCNKFCRPRDDFFGHYACDQNGNKTCMEGWMGPECNKAICRQGCSPKHGSCKLPGDCRCQYGWQGLYCDKCIPHPGCVHGTCNEPWQCLCETNWGGQLCDKDLNYCGTHQPCLNRGTCSNTGPDKYQCSCPEGYSGPNCEIAEHACLSDPCHNRGSCKETSSGFECECSPGWTGPTCSTNIDDCSPNNCSHGGTCQDLVNGFKCVCPPQWTGKTCQLDANECEAKPCVNARSCKNLIASYYCDCLPGWMGQNCDININDCLGQCQNDASCRDLVNGYRCICPPGYAGDHCERDIDECASNPCLNGGHCQNEINRFQCLCPTGFSGNLCQLDIDYCEPNPCQNGAQCYNRASDYFCKCPEDYEGKNCSHLKDHCRTTPCEVIDSCTVAMASNDTPEGVRYISSNVCGPHGKCKSESGGKFTCDCNKGFTGTYCHENINDCEGNPCTNGGTCIDGVNSYKCICSDGWEGAHCENNINDCSQNPCHYGGTCRDLVNDFYCDCKNGWKGKTCHSRDSQCDEATCNNGGTCYDEVDTFKCMCPGGWEGTTCNIARNSSCLPNPCHNGGTCVVNGDSFTCVCKEGWEGPICTQNTNDCSPHPCYNSGTCVDGDNWYRCECAPGFAGPDCRININECQSSPCAFGATCVDEINGYQCICPPGHSGAKCHEVSGRSCITMGRVILDGAKWDDDCNTCQCLNGRVACSKVWCGPRPCRLHKGHGECPNGQSCIPVLDDQCFVRPCTGAGECRSSSLQPVKTKCTSDSYYQDNCANITFTFNKEMMSPGLTTEHICSELRNLNILKNVSAEYSIYIACEPSLSANNEIHVAISAEDIRDDGNPVKEITDKIIDLVSKRDGNSSLIAAVAEVRVQRRPLKNRTDFLVPLLSSVLTVAWVCCLVTAFYWCVRKRRRKPSSHTHSAPEDNTTNNVREQLNQIKNPIEKHGANTVPIKDYENKNSKMSKIRTHNSEVEEDDMDKHQQKVRFAKQPVYTLVDREEKVPQRTPTKHPNWTNKQDNRDLESAQSLNRMEYIV</sequence>
<name>JAG1_RAT</name>
<comment type="function">
    <text>Ligand for multiple Notch receptors and involved in the mediation of Notch signaling. May be involved in cell-fate decisions during hematopoiesis. Enhances fibroblast growth factor-induced angiogenesis (in vitro). Seems to be involved in early and late stages of mammalian cardiovascular development. Inhibits myoblast differentiation. May regulate fibroblast growth factor-induced angiogenesis.</text>
</comment>
<comment type="subunit">
    <text evidence="3 8">Interacts with NOTCH1 (PubMed:28089369). Interacts with NOTCH2 and NOTCH3 (By similarity).</text>
</comment>
<comment type="interaction">
    <interactant intactId="EBI-4567800">
        <id>Q63722</id>
    </interactant>
    <interactant intactId="EBI-1046087">
        <id>Q07954</id>
        <label>LRP1</label>
    </interactant>
    <organismsDiffer>true</organismsDiffer>
    <experiments>4</experiments>
</comment>
<comment type="interaction">
    <interactant intactId="EBI-4567800">
        <id>Q63722</id>
    </interactant>
    <interactant intactId="EBI-4567830">
        <id>Q03350</id>
        <label>Thbs2</label>
    </interactant>
    <organismsDiffer>true</organismsDiffer>
    <experiments>2</experiments>
</comment>
<comment type="subcellular location">
    <subcellularLocation>
        <location>Membrane</location>
        <topology>Single-pass type I membrane protein</topology>
    </subcellularLocation>
    <subcellularLocation>
        <location evidence="2">Cell membrane</location>
    </subcellularLocation>
</comment>
<comment type="tissue specificity">
    <text>Widely expressed in a variety of tissues.</text>
</comment>
<comment type="developmental stage">
    <text>Expression is seen in 11.5 dpc to 14.5 dpc embryos in four distinct regions of the ventricular zone in the developing spinal cord.</text>
</comment>